<evidence type="ECO:0000255" key="1">
    <source>
        <dbReference type="HAMAP-Rule" id="MF_01660"/>
    </source>
</evidence>
<name>MENH_KLEP3</name>
<dbReference type="EC" id="4.2.99.20" evidence="1"/>
<dbReference type="EMBL" id="CP000964">
    <property type="protein sequence ID" value="ACI09689.1"/>
    <property type="molecule type" value="Genomic_DNA"/>
</dbReference>
<dbReference type="SMR" id="B5XNX1"/>
<dbReference type="ESTHER" id="klep3-menh">
    <property type="family name" value="MenH_SHCHC"/>
</dbReference>
<dbReference type="KEGG" id="kpe:KPK_1488"/>
<dbReference type="HOGENOM" id="CLU_020336_38_2_6"/>
<dbReference type="UniPathway" id="UPA00079"/>
<dbReference type="UniPathway" id="UPA01057">
    <property type="reaction ID" value="UER00900"/>
</dbReference>
<dbReference type="Proteomes" id="UP000001734">
    <property type="component" value="Chromosome"/>
</dbReference>
<dbReference type="GO" id="GO:0070205">
    <property type="term" value="F:2-succinyl-6-hydroxy-2,4-cyclohexadiene-1-carboxylate synthase activity"/>
    <property type="evidence" value="ECO:0007669"/>
    <property type="project" value="UniProtKB-UniRule"/>
</dbReference>
<dbReference type="GO" id="GO:0009234">
    <property type="term" value="P:menaquinone biosynthetic process"/>
    <property type="evidence" value="ECO:0007669"/>
    <property type="project" value="UniProtKB-UniRule"/>
</dbReference>
<dbReference type="Gene3D" id="3.40.50.1820">
    <property type="entry name" value="alpha/beta hydrolase"/>
    <property type="match status" value="1"/>
</dbReference>
<dbReference type="HAMAP" id="MF_01660">
    <property type="entry name" value="MenH"/>
    <property type="match status" value="1"/>
</dbReference>
<dbReference type="InterPro" id="IPR000073">
    <property type="entry name" value="AB_hydrolase_1"/>
</dbReference>
<dbReference type="InterPro" id="IPR029058">
    <property type="entry name" value="AB_hydrolase_fold"/>
</dbReference>
<dbReference type="InterPro" id="IPR022485">
    <property type="entry name" value="SHCHC_synthase_MenH"/>
</dbReference>
<dbReference type="NCBIfam" id="TIGR03695">
    <property type="entry name" value="menH_SHCHC"/>
    <property type="match status" value="1"/>
</dbReference>
<dbReference type="NCBIfam" id="NF008340">
    <property type="entry name" value="PRK11126.1"/>
    <property type="match status" value="1"/>
</dbReference>
<dbReference type="PANTHER" id="PTHR42916">
    <property type="entry name" value="2-SUCCINYL-5-ENOLPYRUVYL-6-HYDROXY-3-CYCLOHEXENE-1-CARBOXYLATE SYNTHASE"/>
    <property type="match status" value="1"/>
</dbReference>
<dbReference type="PANTHER" id="PTHR42916:SF1">
    <property type="entry name" value="PROTEIN PHYLLO, CHLOROPLASTIC"/>
    <property type="match status" value="1"/>
</dbReference>
<dbReference type="Pfam" id="PF12697">
    <property type="entry name" value="Abhydrolase_6"/>
    <property type="match status" value="1"/>
</dbReference>
<dbReference type="SUPFAM" id="SSF53474">
    <property type="entry name" value="alpha/beta-Hydrolases"/>
    <property type="match status" value="1"/>
</dbReference>
<accession>B5XNX1</accession>
<gene>
    <name evidence="1" type="primary">menH</name>
    <name type="ordered locus">KPK_1488</name>
</gene>
<comment type="function">
    <text evidence="1">Catalyzes a proton abstraction reaction that results in 2,5-elimination of pyruvate from 2-succinyl-5-enolpyruvyl-6-hydroxy-3-cyclohexene-1-carboxylate (SEPHCHC) and the formation of 2-succinyl-6-hydroxy-2,4-cyclohexadiene-1-carboxylate (SHCHC).</text>
</comment>
<comment type="catalytic activity">
    <reaction evidence="1">
        <text>5-enolpyruvoyl-6-hydroxy-2-succinyl-cyclohex-3-ene-1-carboxylate = (1R,6R)-6-hydroxy-2-succinyl-cyclohexa-2,4-diene-1-carboxylate + pyruvate</text>
        <dbReference type="Rhea" id="RHEA:25597"/>
        <dbReference type="ChEBI" id="CHEBI:15361"/>
        <dbReference type="ChEBI" id="CHEBI:58689"/>
        <dbReference type="ChEBI" id="CHEBI:58818"/>
        <dbReference type="EC" id="4.2.99.20"/>
    </reaction>
</comment>
<comment type="pathway">
    <text evidence="1">Quinol/quinone metabolism; 1,4-dihydroxy-2-naphthoate biosynthesis; 1,4-dihydroxy-2-naphthoate from chorismate: step 3/7.</text>
</comment>
<comment type="pathway">
    <text evidence="1">Quinol/quinone metabolism; menaquinone biosynthesis.</text>
</comment>
<comment type="subunit">
    <text evidence="1">Monomer.</text>
</comment>
<comment type="similarity">
    <text evidence="1">Belongs to the AB hydrolase superfamily. MenH family.</text>
</comment>
<proteinExistence type="inferred from homology"/>
<protein>
    <recommendedName>
        <fullName evidence="1">2-succinyl-6-hydroxy-2,4-cyclohexadiene-1-carboxylate synthase</fullName>
        <shortName evidence="1">SHCHC synthase</shortName>
        <ecNumber evidence="1">4.2.99.20</ecNumber>
    </recommendedName>
</protein>
<organism>
    <name type="scientific">Klebsiella pneumoniae (strain 342)</name>
    <dbReference type="NCBI Taxonomy" id="507522"/>
    <lineage>
        <taxon>Bacteria</taxon>
        <taxon>Pseudomonadati</taxon>
        <taxon>Pseudomonadota</taxon>
        <taxon>Gammaproteobacteria</taxon>
        <taxon>Enterobacterales</taxon>
        <taxon>Enterobacteriaceae</taxon>
        <taxon>Klebsiella/Raoultella group</taxon>
        <taxon>Klebsiella</taxon>
        <taxon>Klebsiella pneumoniae complex</taxon>
    </lineage>
</organism>
<sequence>MTLSAAVDNGQSGYPWLVFLHGFSGDRDEWREVGDAFPAWPRLYLDLPGHGGSADIAVQDFAGVNTLLLATLNSYNILNYWLIGYSLGGRVAMNFACQPRAGLRGLIVEGGHPGLQDAEARQARRSNDRAWAERFRRDPLAQVFADWYQQPVFASLDAAQRESLVALRSRNNGATLAAMLQATSLAGQADLRAPLQARDFPFHYLCGERDAKFRAIAQALAADTHIIHHAGHNAHRDNPAAVIACLAQILAS</sequence>
<feature type="chain" id="PRO_1000187113" description="2-succinyl-6-hydroxy-2,4-cyclohexadiene-1-carboxylate synthase">
    <location>
        <begin position="1"/>
        <end position="252"/>
    </location>
</feature>
<keyword id="KW-0456">Lyase</keyword>
<keyword id="KW-0474">Menaquinone biosynthesis</keyword>
<reference key="1">
    <citation type="journal article" date="2008" name="PLoS Genet.">
        <title>Complete genome sequence of the N2-fixing broad host range endophyte Klebsiella pneumoniae 342 and virulence predictions verified in mice.</title>
        <authorList>
            <person name="Fouts D.E."/>
            <person name="Tyler H.L."/>
            <person name="DeBoy R.T."/>
            <person name="Daugherty S."/>
            <person name="Ren Q."/>
            <person name="Badger J.H."/>
            <person name="Durkin A.S."/>
            <person name="Huot H."/>
            <person name="Shrivastava S."/>
            <person name="Kothari S."/>
            <person name="Dodson R.J."/>
            <person name="Mohamoud Y."/>
            <person name="Khouri H."/>
            <person name="Roesch L.F.W."/>
            <person name="Krogfelt K.A."/>
            <person name="Struve C."/>
            <person name="Triplett E.W."/>
            <person name="Methe B.A."/>
        </authorList>
    </citation>
    <scope>NUCLEOTIDE SEQUENCE [LARGE SCALE GENOMIC DNA]</scope>
    <source>
        <strain>342</strain>
    </source>
</reference>